<accession>Q0A4L8</accession>
<reference key="1">
    <citation type="submission" date="2006-08" db="EMBL/GenBank/DDBJ databases">
        <title>Complete sequence of Alkalilimnicola ehrilichei MLHE-1.</title>
        <authorList>
            <person name="Copeland A."/>
            <person name="Lucas S."/>
            <person name="Lapidus A."/>
            <person name="Barry K."/>
            <person name="Detter J.C."/>
            <person name="Glavina del Rio T."/>
            <person name="Hammon N."/>
            <person name="Israni S."/>
            <person name="Dalin E."/>
            <person name="Tice H."/>
            <person name="Pitluck S."/>
            <person name="Sims D."/>
            <person name="Brettin T."/>
            <person name="Bruce D."/>
            <person name="Han C."/>
            <person name="Tapia R."/>
            <person name="Gilna P."/>
            <person name="Schmutz J."/>
            <person name="Larimer F."/>
            <person name="Land M."/>
            <person name="Hauser L."/>
            <person name="Kyrpides N."/>
            <person name="Mikhailova N."/>
            <person name="Oremland R.S."/>
            <person name="Hoeft S.E."/>
            <person name="Switzer-Blum J."/>
            <person name="Kulp T."/>
            <person name="King G."/>
            <person name="Tabita R."/>
            <person name="Witte B."/>
            <person name="Santini J.M."/>
            <person name="Basu P."/>
            <person name="Hollibaugh J.T."/>
            <person name="Xie G."/>
            <person name="Stolz J.F."/>
            <person name="Richardson P."/>
        </authorList>
    </citation>
    <scope>NUCLEOTIDE SEQUENCE [LARGE SCALE GENOMIC DNA]</scope>
    <source>
        <strain>ATCC BAA-1101 / DSM 17681 / MLHE-1</strain>
    </source>
</reference>
<proteinExistence type="inferred from homology"/>
<keyword id="KW-0963">Cytoplasm</keyword>
<keyword id="KW-0489">Methyltransferase</keyword>
<keyword id="KW-1185">Reference proteome</keyword>
<keyword id="KW-0698">rRNA processing</keyword>
<keyword id="KW-0949">S-adenosyl-L-methionine</keyword>
<keyword id="KW-0808">Transferase</keyword>
<sequence>MAGDPLLPALHTGVERLGLTLPEGAAEALITYLRLLERWNRAYNLSAIRDPGEMLHRHLLDSLSILPYVEGDSLLDVGSGAGLPGIPLALARPGLTVTLLDSNGKKQRFTRQVALELGLHRLRFAQARLADYRPGQPFDTVVSRAFAALSGYVPEALRLCRAGGRVLAMKGRLPEEELAALPRSLRGCTLTALDVPGVAGQRHLLTWTAPAVSATEEANP</sequence>
<comment type="function">
    <text evidence="1">Specifically methylates the N7 position of guanine in position 527 of 16S rRNA.</text>
</comment>
<comment type="catalytic activity">
    <reaction evidence="1">
        <text>guanosine(527) in 16S rRNA + S-adenosyl-L-methionine = N(7)-methylguanosine(527) in 16S rRNA + S-adenosyl-L-homocysteine</text>
        <dbReference type="Rhea" id="RHEA:42732"/>
        <dbReference type="Rhea" id="RHEA-COMP:10209"/>
        <dbReference type="Rhea" id="RHEA-COMP:10210"/>
        <dbReference type="ChEBI" id="CHEBI:57856"/>
        <dbReference type="ChEBI" id="CHEBI:59789"/>
        <dbReference type="ChEBI" id="CHEBI:74269"/>
        <dbReference type="ChEBI" id="CHEBI:74480"/>
        <dbReference type="EC" id="2.1.1.170"/>
    </reaction>
</comment>
<comment type="subcellular location">
    <subcellularLocation>
        <location evidence="1">Cytoplasm</location>
    </subcellularLocation>
</comment>
<comment type="similarity">
    <text evidence="1">Belongs to the methyltransferase superfamily. RNA methyltransferase RsmG family.</text>
</comment>
<organism>
    <name type="scientific">Alkalilimnicola ehrlichii (strain ATCC BAA-1101 / DSM 17681 / MLHE-1)</name>
    <dbReference type="NCBI Taxonomy" id="187272"/>
    <lineage>
        <taxon>Bacteria</taxon>
        <taxon>Pseudomonadati</taxon>
        <taxon>Pseudomonadota</taxon>
        <taxon>Gammaproteobacteria</taxon>
        <taxon>Chromatiales</taxon>
        <taxon>Ectothiorhodospiraceae</taxon>
        <taxon>Alkalilimnicola</taxon>
    </lineage>
</organism>
<protein>
    <recommendedName>
        <fullName evidence="1">Ribosomal RNA small subunit methyltransferase G</fullName>
        <ecNumber evidence="1">2.1.1.170</ecNumber>
    </recommendedName>
    <alternativeName>
        <fullName evidence="1">16S rRNA 7-methylguanosine methyltransferase</fullName>
        <shortName evidence="1">16S rRNA m7G methyltransferase</shortName>
    </alternativeName>
</protein>
<evidence type="ECO:0000255" key="1">
    <source>
        <dbReference type="HAMAP-Rule" id="MF_00074"/>
    </source>
</evidence>
<name>RSMG_ALKEH</name>
<gene>
    <name evidence="1" type="primary">rsmG</name>
    <name type="ordered locus">Mlg_2879</name>
</gene>
<dbReference type="EC" id="2.1.1.170" evidence="1"/>
<dbReference type="EMBL" id="CP000453">
    <property type="protein sequence ID" value="ABI58219.1"/>
    <property type="molecule type" value="Genomic_DNA"/>
</dbReference>
<dbReference type="RefSeq" id="WP_011630612.1">
    <property type="nucleotide sequence ID" value="NC_008340.1"/>
</dbReference>
<dbReference type="SMR" id="Q0A4L8"/>
<dbReference type="KEGG" id="aeh:Mlg_2879"/>
<dbReference type="eggNOG" id="COG0357">
    <property type="taxonomic scope" value="Bacteria"/>
</dbReference>
<dbReference type="HOGENOM" id="CLU_065341_2_0_6"/>
<dbReference type="OrthoDB" id="9808773at2"/>
<dbReference type="Proteomes" id="UP000001962">
    <property type="component" value="Chromosome"/>
</dbReference>
<dbReference type="GO" id="GO:0005829">
    <property type="term" value="C:cytosol"/>
    <property type="evidence" value="ECO:0007669"/>
    <property type="project" value="TreeGrafter"/>
</dbReference>
<dbReference type="GO" id="GO:0070043">
    <property type="term" value="F:rRNA (guanine-N7-)-methyltransferase activity"/>
    <property type="evidence" value="ECO:0007669"/>
    <property type="project" value="UniProtKB-UniRule"/>
</dbReference>
<dbReference type="CDD" id="cd02440">
    <property type="entry name" value="AdoMet_MTases"/>
    <property type="match status" value="1"/>
</dbReference>
<dbReference type="Gene3D" id="3.40.50.150">
    <property type="entry name" value="Vaccinia Virus protein VP39"/>
    <property type="match status" value="1"/>
</dbReference>
<dbReference type="HAMAP" id="MF_00074">
    <property type="entry name" value="16SrRNA_methyltr_G"/>
    <property type="match status" value="1"/>
</dbReference>
<dbReference type="InterPro" id="IPR003682">
    <property type="entry name" value="rRNA_ssu_MeTfrase_G"/>
</dbReference>
<dbReference type="InterPro" id="IPR029063">
    <property type="entry name" value="SAM-dependent_MTases_sf"/>
</dbReference>
<dbReference type="NCBIfam" id="TIGR00138">
    <property type="entry name" value="rsmG_gidB"/>
    <property type="match status" value="1"/>
</dbReference>
<dbReference type="PANTHER" id="PTHR31760">
    <property type="entry name" value="S-ADENOSYL-L-METHIONINE-DEPENDENT METHYLTRANSFERASES SUPERFAMILY PROTEIN"/>
    <property type="match status" value="1"/>
</dbReference>
<dbReference type="PANTHER" id="PTHR31760:SF0">
    <property type="entry name" value="S-ADENOSYL-L-METHIONINE-DEPENDENT METHYLTRANSFERASES SUPERFAMILY PROTEIN"/>
    <property type="match status" value="1"/>
</dbReference>
<dbReference type="Pfam" id="PF02527">
    <property type="entry name" value="GidB"/>
    <property type="match status" value="1"/>
</dbReference>
<dbReference type="PIRSF" id="PIRSF003078">
    <property type="entry name" value="GidB"/>
    <property type="match status" value="1"/>
</dbReference>
<dbReference type="SUPFAM" id="SSF53335">
    <property type="entry name" value="S-adenosyl-L-methionine-dependent methyltransferases"/>
    <property type="match status" value="1"/>
</dbReference>
<feature type="chain" id="PRO_1000075211" description="Ribosomal RNA small subunit methyltransferase G">
    <location>
        <begin position="1"/>
        <end position="220"/>
    </location>
</feature>
<feature type="binding site" evidence="1">
    <location>
        <position position="78"/>
    </location>
    <ligand>
        <name>S-adenosyl-L-methionine</name>
        <dbReference type="ChEBI" id="CHEBI:59789"/>
    </ligand>
</feature>
<feature type="binding site" evidence="1">
    <location>
        <position position="83"/>
    </location>
    <ligand>
        <name>S-adenosyl-L-methionine</name>
        <dbReference type="ChEBI" id="CHEBI:59789"/>
    </ligand>
</feature>
<feature type="binding site" evidence="1">
    <location>
        <position position="144"/>
    </location>
    <ligand>
        <name>S-adenosyl-L-methionine</name>
        <dbReference type="ChEBI" id="CHEBI:59789"/>
    </ligand>
</feature>